<keyword id="KW-0998">Cell outer membrane</keyword>
<keyword id="KW-0449">Lipoprotein</keyword>
<keyword id="KW-0472">Membrane</keyword>
<keyword id="KW-0564">Palmitate</keyword>
<keyword id="KW-0614">Plasmid</keyword>
<keyword id="KW-0732">Signal</keyword>
<feature type="signal peptide" evidence="1">
    <location>
        <begin position="1"/>
        <end position="16"/>
    </location>
</feature>
<feature type="chain" id="PRO_0000018079" description="Outer surface protein A" evidence="1">
    <location>
        <begin position="17"/>
        <end position="273"/>
    </location>
</feature>
<feature type="lipid moiety-binding region" description="N-palmitoyl cysteine" evidence="1">
    <location>
        <position position="17"/>
    </location>
</feature>
<feature type="lipid moiety-binding region" description="S-diacylglycerol cysteine" evidence="1">
    <location>
        <position position="17"/>
    </location>
</feature>
<reference evidence="5" key="1">
    <citation type="journal article" date="1995" name="Med. Microbiol. Immunol.">
        <title>Sequence analysis of ospA genes shows homogeneity within Borrelia burgdorferi sensu stricto and Borrelia afzelii strains but reveals major subgroups within the Borrelia garinii species.</title>
        <authorList>
            <person name="Will G."/>
            <person name="Jauris-Heipke S."/>
            <person name="Schwab E."/>
            <person name="Busch U."/>
            <person name="Roessler D."/>
            <person name="Soutschek E."/>
            <person name="Wilske B."/>
            <person name="Preac-Mursic V."/>
        </authorList>
    </citation>
    <scope>NUCLEOTIDE SEQUENCE [GENOMIC DNA]</scope>
    <source>
        <strain>PBo</strain>
    </source>
</reference>
<geneLocation type="plasmid">
    <name>lp54</name>
</geneLocation>
<evidence type="ECO:0000255" key="1">
    <source>
        <dbReference type="PROSITE-ProRule" id="PRU00303"/>
    </source>
</evidence>
<evidence type="ECO:0000303" key="2">
    <source>
    </source>
</evidence>
<evidence type="ECO:0000305" key="3"/>
<evidence type="ECO:0000305" key="4">
    <source>
    </source>
</evidence>
<evidence type="ECO:0000312" key="5">
    <source>
        <dbReference type="EMBL" id="CAA56468.1"/>
    </source>
</evidence>
<accession>P0DW55</accession>
<accession>P0A3N6</accession>
<accession>Q09088</accession>
<proteinExistence type="inferred from homology"/>
<dbReference type="EMBL" id="X80183">
    <property type="protein sequence ID" value="CAA56468.1"/>
    <property type="molecule type" value="Genomic_DNA"/>
</dbReference>
<dbReference type="PIR" id="S23112">
    <property type="entry name" value="S23112"/>
</dbReference>
<dbReference type="SMR" id="P0DW55"/>
<dbReference type="GO" id="GO:0009279">
    <property type="term" value="C:cell outer membrane"/>
    <property type="evidence" value="ECO:0007669"/>
    <property type="project" value="UniProtKB-SubCell"/>
</dbReference>
<dbReference type="GO" id="GO:0009986">
    <property type="term" value="C:cell surface"/>
    <property type="evidence" value="ECO:0007669"/>
    <property type="project" value="UniProtKB-SubCell"/>
</dbReference>
<dbReference type="FunFam" id="2.40.128.160:FF:000001">
    <property type="entry name" value="Outer surface protein A"/>
    <property type="match status" value="1"/>
</dbReference>
<dbReference type="Gene3D" id="3.90.930.1">
    <property type="match status" value="1"/>
</dbReference>
<dbReference type="Gene3D" id="2.40.128.160">
    <property type="entry name" value="C1 set domains (antibody constant domain-like)"/>
    <property type="match status" value="1"/>
</dbReference>
<dbReference type="InterPro" id="IPR001809">
    <property type="entry name" value="OM_lipoprot_Borrelia"/>
</dbReference>
<dbReference type="InterPro" id="IPR023322">
    <property type="entry name" value="OM_lipoprot_dom_sf"/>
</dbReference>
<dbReference type="Pfam" id="PF00820">
    <property type="entry name" value="Lipoprotein_1"/>
    <property type="match status" value="1"/>
</dbReference>
<dbReference type="PRINTS" id="PR00968">
    <property type="entry name" value="OUTRSURFACE"/>
</dbReference>
<dbReference type="SUPFAM" id="SSF51087">
    <property type="entry name" value="Outer surface protein"/>
    <property type="match status" value="1"/>
</dbReference>
<dbReference type="PROSITE" id="PS51257">
    <property type="entry name" value="PROKAR_LIPOPROTEIN"/>
    <property type="match status" value="1"/>
</dbReference>
<name>OSPA6_BORBG</name>
<protein>
    <recommendedName>
        <fullName evidence="2">Outer surface protein A</fullName>
    </recommendedName>
</protein>
<comment type="subcellular location">
    <subcellularLocation>
        <location evidence="4">Cell outer membrane</location>
        <topology evidence="1">Lipid-anchor</topology>
    </subcellularLocation>
    <subcellularLocation>
        <location evidence="4">Cell surface</location>
    </subcellularLocation>
</comment>
<comment type="similarity">
    <text evidence="3">Belongs to the OspA lipoprotein family.</text>
</comment>
<gene>
    <name evidence="2" type="primary">ospA</name>
</gene>
<sequence>MKKYLLGIGLILALIACKQNVSSLDEKNSASVDLPGEMKVLVSKEKDKDGKYSLKATVDKIELKGTSDKDNGSGVLEGTKDDKSKAKLTIADDLSKTTFELFKEDGKTLVSRKVSSKDKTSTDEMFNEKGELSAKTMTRENGTKLEYTEMKSDGTGKAKEVLKNFTLEGKVANDKVTLEVKEGTVTLSKEIAKSGEVTVALNDTNTTQATKKTGAWDSKTSTLTISVNSKKTTQLVFTKQDTITVQKYDSAGTNLEGTAVEIKTLDELKNALK</sequence>
<organism>
    <name type="scientific">Borreliella burgdorferi</name>
    <name type="common">Lyme disease spirochete</name>
    <name type="synonym">Borrelia burgdorferi</name>
    <dbReference type="NCBI Taxonomy" id="139"/>
    <lineage>
        <taxon>Bacteria</taxon>
        <taxon>Pseudomonadati</taxon>
        <taxon>Spirochaetota</taxon>
        <taxon>Spirochaetia</taxon>
        <taxon>Spirochaetales</taxon>
        <taxon>Borreliaceae</taxon>
        <taxon>Borreliella</taxon>
    </lineage>
</organism>